<keyword id="KW-0067">ATP-binding</keyword>
<keyword id="KW-0436">Ligase</keyword>
<keyword id="KW-0479">Metal-binding</keyword>
<keyword id="KW-0547">Nucleotide-binding</keyword>
<keyword id="KW-0862">Zinc</keyword>
<reference key="1">
    <citation type="submission" date="2009-07" db="EMBL/GenBank/DDBJ databases">
        <title>The genome sequence of Mycobacterium tuberculosis strain KZN 1435.</title>
        <authorList>
            <person name="Murray M."/>
            <person name="Pillay M."/>
            <person name="Borowsky M.L."/>
            <person name="Young S.K."/>
            <person name="Zeng Q."/>
            <person name="Koehrsen M."/>
            <person name="Alvarado L."/>
            <person name="Berlin A.M."/>
            <person name="Borenstein D."/>
            <person name="Chen Z."/>
            <person name="Engels R."/>
            <person name="Freedman E."/>
            <person name="Gellesch M."/>
            <person name="Goldberg J."/>
            <person name="Griggs A."/>
            <person name="Gujja S."/>
            <person name="Heiman D.I."/>
            <person name="Hepburn T.A."/>
            <person name="Howarth C."/>
            <person name="Jen D."/>
            <person name="Larson L."/>
            <person name="Lewis B."/>
            <person name="Mehta T."/>
            <person name="Park D."/>
            <person name="Pearson M."/>
            <person name="Roberts A."/>
            <person name="Saif S."/>
            <person name="Shea T.D."/>
            <person name="Shenoy N."/>
            <person name="Sisk P."/>
            <person name="Stolte C."/>
            <person name="Sykes S.N."/>
            <person name="Walk T."/>
            <person name="White J."/>
            <person name="Yandava C."/>
            <person name="Haas B."/>
            <person name="Nusbaum C."/>
            <person name="Galagan J."/>
            <person name="Birren B."/>
        </authorList>
    </citation>
    <scope>NUCLEOTIDE SEQUENCE [LARGE SCALE GENOMIC DNA]</scope>
    <source>
        <strain>KZN 1435 / MDR</strain>
    </source>
</reference>
<gene>
    <name evidence="1" type="primary">mshC</name>
    <name type="ordered locus">TBMG_01851</name>
</gene>
<dbReference type="EC" id="6.3.1.13" evidence="1"/>
<dbReference type="EMBL" id="CP001658">
    <property type="protein sequence ID" value="ACT24913.1"/>
    <property type="molecule type" value="Genomic_DNA"/>
</dbReference>
<dbReference type="RefSeq" id="WP_003411091.1">
    <property type="nucleotide sequence ID" value="NZ_KK341220.1"/>
</dbReference>
<dbReference type="SMR" id="C6DPT0"/>
<dbReference type="KEGG" id="mtb:TBMG_01851"/>
<dbReference type="PATRIC" id="fig|478434.13.peg.2272"/>
<dbReference type="HOGENOM" id="CLU_013528_0_0_11"/>
<dbReference type="GO" id="GO:0005829">
    <property type="term" value="C:cytosol"/>
    <property type="evidence" value="ECO:0007669"/>
    <property type="project" value="TreeGrafter"/>
</dbReference>
<dbReference type="GO" id="GO:0005524">
    <property type="term" value="F:ATP binding"/>
    <property type="evidence" value="ECO:0007669"/>
    <property type="project" value="UniProtKB-KW"/>
</dbReference>
<dbReference type="GO" id="GO:0035446">
    <property type="term" value="F:cysteine-glucosaminylinositol ligase activity"/>
    <property type="evidence" value="ECO:0007669"/>
    <property type="project" value="UniProtKB-UniRule"/>
</dbReference>
<dbReference type="GO" id="GO:0004817">
    <property type="term" value="F:cysteine-tRNA ligase activity"/>
    <property type="evidence" value="ECO:0007669"/>
    <property type="project" value="TreeGrafter"/>
</dbReference>
<dbReference type="GO" id="GO:0008270">
    <property type="term" value="F:zinc ion binding"/>
    <property type="evidence" value="ECO:0007669"/>
    <property type="project" value="UniProtKB-UniRule"/>
</dbReference>
<dbReference type="GO" id="GO:0006423">
    <property type="term" value="P:cysteinyl-tRNA aminoacylation"/>
    <property type="evidence" value="ECO:0007669"/>
    <property type="project" value="TreeGrafter"/>
</dbReference>
<dbReference type="GO" id="GO:0010125">
    <property type="term" value="P:mycothiol biosynthetic process"/>
    <property type="evidence" value="ECO:0007669"/>
    <property type="project" value="UniProtKB-UniRule"/>
</dbReference>
<dbReference type="CDD" id="cd07955">
    <property type="entry name" value="Anticodon_Ia_Cys_like"/>
    <property type="match status" value="1"/>
</dbReference>
<dbReference type="CDD" id="cd00672">
    <property type="entry name" value="CysRS_core"/>
    <property type="match status" value="1"/>
</dbReference>
<dbReference type="FunFam" id="1.20.120.640:FF:000001">
    <property type="entry name" value="L-cysteine:1D-myo-inositol 2-amino-2-deoxy-alpha-D-glucopyranoside ligase"/>
    <property type="match status" value="1"/>
</dbReference>
<dbReference type="FunFam" id="3.40.50.620:FF:000134">
    <property type="entry name" value="L-cysteine:1D-myo-inositol 2-amino-2-deoxy-alpha-D-glucopyranoside ligase"/>
    <property type="match status" value="1"/>
</dbReference>
<dbReference type="Gene3D" id="1.20.120.640">
    <property type="entry name" value="Anticodon-binding domain of a subclass of class I aminoacyl-tRNA synthetases"/>
    <property type="match status" value="1"/>
</dbReference>
<dbReference type="Gene3D" id="3.40.50.620">
    <property type="entry name" value="HUPs"/>
    <property type="match status" value="1"/>
</dbReference>
<dbReference type="HAMAP" id="MF_01697">
    <property type="entry name" value="MshC"/>
    <property type="match status" value="1"/>
</dbReference>
<dbReference type="InterPro" id="IPR024909">
    <property type="entry name" value="Cys-tRNA/MSH_ligase"/>
</dbReference>
<dbReference type="InterPro" id="IPR017812">
    <property type="entry name" value="Mycothiol_ligase_MshC"/>
</dbReference>
<dbReference type="InterPro" id="IPR014729">
    <property type="entry name" value="Rossmann-like_a/b/a_fold"/>
</dbReference>
<dbReference type="InterPro" id="IPR032678">
    <property type="entry name" value="tRNA-synt_1_cat_dom"/>
</dbReference>
<dbReference type="NCBIfam" id="TIGR03447">
    <property type="entry name" value="mycothiol_MshC"/>
    <property type="match status" value="1"/>
</dbReference>
<dbReference type="PANTHER" id="PTHR10890:SF3">
    <property type="entry name" value="CYSTEINE--TRNA LIGASE, CYTOPLASMIC"/>
    <property type="match status" value="1"/>
</dbReference>
<dbReference type="PANTHER" id="PTHR10890">
    <property type="entry name" value="CYSTEINYL-TRNA SYNTHETASE"/>
    <property type="match status" value="1"/>
</dbReference>
<dbReference type="Pfam" id="PF01406">
    <property type="entry name" value="tRNA-synt_1e"/>
    <property type="match status" value="1"/>
</dbReference>
<dbReference type="PRINTS" id="PR00983">
    <property type="entry name" value="TRNASYNTHCYS"/>
</dbReference>
<dbReference type="SUPFAM" id="SSF52374">
    <property type="entry name" value="Nucleotidylyl transferase"/>
    <property type="match status" value="1"/>
</dbReference>
<name>MSHC_MYCTK</name>
<organism>
    <name type="scientific">Mycobacterium tuberculosis (strain KZN 1435 / MDR)</name>
    <dbReference type="NCBI Taxonomy" id="478434"/>
    <lineage>
        <taxon>Bacteria</taxon>
        <taxon>Bacillati</taxon>
        <taxon>Actinomycetota</taxon>
        <taxon>Actinomycetes</taxon>
        <taxon>Mycobacteriales</taxon>
        <taxon>Mycobacteriaceae</taxon>
        <taxon>Mycobacterium</taxon>
        <taxon>Mycobacterium tuberculosis complex</taxon>
    </lineage>
</organism>
<sequence length="414" mass="45595">MQSWYCPPVPVLPGRGPQLRLYDSADRQVRPVAPGSKATMYVCGITPYDATHLGHAATYVTFDLIHRLWLDLGHELHYVQNITDIDDPLFERADRDGVDWRDLAQAEVALFCEDMAALRVLPPQDYVGATEAIAEMVELIEKMLACGAAYVIDREMGEYQDIYFRADATLQFGYESGYDRDTMLRLCEERGGDPRRPGKSDELDALLWRAARPGEPSWPSPFGPGRPGWHVECAAIALSRIGSGLDIQGGGSDLIFPHHEFTAAHAECVSGERRFARHYVHAGMIGWDGHKMSKSRGNLVLVSALRAQDVEPSAVRLGLLAGHYRADRFWSQQVLDEATARLHRWRTATALPAGPAAVDVVARVRRYLADDLDTPKAIAALDGWVTDAVEYGGHDAGAPKLVATAIDALLGVDL</sequence>
<proteinExistence type="inferred from homology"/>
<feature type="chain" id="PRO_0000400468" description="L-cysteine:1D-myo-inositol 2-amino-2-deoxy-alpha-D-glucopyranoside ligase">
    <location>
        <begin position="1"/>
        <end position="414"/>
    </location>
</feature>
<feature type="short sequence motif" description="'HIGH' region" evidence="1">
    <location>
        <begin position="45"/>
        <end position="55"/>
    </location>
</feature>
<feature type="short sequence motif" description="'ERGGDP' region" evidence="1">
    <location>
        <begin position="189"/>
        <end position="194"/>
    </location>
</feature>
<feature type="short sequence motif" description="'KMSKS' region" evidence="1">
    <location>
        <begin position="291"/>
        <end position="295"/>
    </location>
</feature>
<feature type="binding site" evidence="1">
    <location>
        <begin position="43"/>
        <end position="46"/>
    </location>
    <ligand>
        <name>L-cysteinyl-5'-AMP</name>
        <dbReference type="ChEBI" id="CHEBI:144924"/>
    </ligand>
</feature>
<feature type="binding site" evidence="1">
    <location>
        <position position="43"/>
    </location>
    <ligand>
        <name>Zn(2+)</name>
        <dbReference type="ChEBI" id="CHEBI:29105"/>
    </ligand>
</feature>
<feature type="binding site" evidence="1">
    <location>
        <position position="58"/>
    </location>
    <ligand>
        <name>L-cysteinyl-5'-AMP</name>
        <dbReference type="ChEBI" id="CHEBI:144924"/>
    </ligand>
</feature>
<feature type="binding site" evidence="1">
    <location>
        <begin position="81"/>
        <end position="83"/>
    </location>
    <ligand>
        <name>L-cysteinyl-5'-AMP</name>
        <dbReference type="ChEBI" id="CHEBI:144924"/>
    </ligand>
</feature>
<feature type="binding site" evidence="1">
    <location>
        <position position="229"/>
    </location>
    <ligand>
        <name>L-cysteinyl-5'-AMP</name>
        <dbReference type="ChEBI" id="CHEBI:144924"/>
    </ligand>
</feature>
<feature type="binding site" evidence="1">
    <location>
        <position position="233"/>
    </location>
    <ligand>
        <name>Zn(2+)</name>
        <dbReference type="ChEBI" id="CHEBI:29105"/>
    </ligand>
</feature>
<feature type="binding site" evidence="1">
    <location>
        <begin position="251"/>
        <end position="253"/>
    </location>
    <ligand>
        <name>L-cysteinyl-5'-AMP</name>
        <dbReference type="ChEBI" id="CHEBI:144924"/>
    </ligand>
</feature>
<feature type="binding site" evidence="1">
    <location>
        <position position="258"/>
    </location>
    <ligand>
        <name>Zn(2+)</name>
        <dbReference type="ChEBI" id="CHEBI:29105"/>
    </ligand>
</feature>
<feature type="binding site" evidence="1">
    <location>
        <position position="285"/>
    </location>
    <ligand>
        <name>L-cysteinyl-5'-AMP</name>
        <dbReference type="ChEBI" id="CHEBI:144924"/>
    </ligand>
</feature>
<protein>
    <recommendedName>
        <fullName evidence="1">L-cysteine:1D-myo-inositol 2-amino-2-deoxy-alpha-D-glucopyranoside ligase</fullName>
        <shortName evidence="1">L-Cys:GlcN-Ins ligase</shortName>
        <ecNumber evidence="1">6.3.1.13</ecNumber>
    </recommendedName>
    <alternativeName>
        <fullName evidence="1">Mycothiol ligase</fullName>
        <shortName evidence="1">MSH ligase</shortName>
    </alternativeName>
</protein>
<evidence type="ECO:0000255" key="1">
    <source>
        <dbReference type="HAMAP-Rule" id="MF_01697"/>
    </source>
</evidence>
<comment type="function">
    <text evidence="1">Catalyzes the ATP-dependent condensation of GlcN-Ins and L-cysteine to form L-Cys-GlcN-Ins.</text>
</comment>
<comment type="catalytic activity">
    <reaction evidence="1">
        <text>1D-myo-inositol 2-amino-2-deoxy-alpha-D-glucopyranoside + L-cysteine + ATP = 1D-myo-inositol 2-(L-cysteinylamino)-2-deoxy-alpha-D-glucopyranoside + AMP + diphosphate + H(+)</text>
        <dbReference type="Rhea" id="RHEA:26176"/>
        <dbReference type="ChEBI" id="CHEBI:15378"/>
        <dbReference type="ChEBI" id="CHEBI:30616"/>
        <dbReference type="ChEBI" id="CHEBI:33019"/>
        <dbReference type="ChEBI" id="CHEBI:35235"/>
        <dbReference type="ChEBI" id="CHEBI:58886"/>
        <dbReference type="ChEBI" id="CHEBI:58887"/>
        <dbReference type="ChEBI" id="CHEBI:456215"/>
        <dbReference type="EC" id="6.3.1.13"/>
    </reaction>
</comment>
<comment type="cofactor">
    <cofactor evidence="1">
        <name>Zn(2+)</name>
        <dbReference type="ChEBI" id="CHEBI:29105"/>
    </cofactor>
    <text evidence="1">Binds 1 zinc ion per subunit.</text>
</comment>
<comment type="subunit">
    <text evidence="1">Monomer.</text>
</comment>
<comment type="similarity">
    <text evidence="1">Belongs to the class-I aminoacyl-tRNA synthetase family. MshC subfamily.</text>
</comment>
<accession>C6DPT0</accession>